<reference key="1">
    <citation type="journal article" date="2007" name="Proc. Natl. Acad. Sci. U.S.A.">
        <title>Deep-sea vent epsilon-proteobacterial genomes provide insights into emergence of pathogens.</title>
        <authorList>
            <person name="Nakagawa S."/>
            <person name="Takaki Y."/>
            <person name="Shimamura S."/>
            <person name="Reysenbach A.-L."/>
            <person name="Takai K."/>
            <person name="Horikoshi K."/>
        </authorList>
    </citation>
    <scope>NUCLEOTIDE SEQUENCE [LARGE SCALE GENOMIC DNA]</scope>
    <source>
        <strain>SB155-2</strain>
    </source>
</reference>
<keyword id="KW-0963">Cytoplasm</keyword>
<keyword id="KW-0488">Methylation</keyword>
<keyword id="KW-0648">Protein biosynthesis</keyword>
<keyword id="KW-1185">Reference proteome</keyword>
<protein>
    <recommendedName>
        <fullName evidence="1">Peptide chain release factor 2</fullName>
        <shortName evidence="1">RF-2</shortName>
    </recommendedName>
</protein>
<feature type="chain" id="PRO_1000005006" description="Peptide chain release factor 2">
    <location>
        <begin position="1"/>
        <end position="368"/>
    </location>
</feature>
<feature type="modified residue" description="N5-methylglutamine" evidence="1">
    <location>
        <position position="251"/>
    </location>
</feature>
<organism>
    <name type="scientific">Nitratiruptor sp. (strain SB155-2)</name>
    <dbReference type="NCBI Taxonomy" id="387092"/>
    <lineage>
        <taxon>Bacteria</taxon>
        <taxon>Pseudomonadati</taxon>
        <taxon>Campylobacterota</taxon>
        <taxon>Epsilonproteobacteria</taxon>
        <taxon>Nautiliales</taxon>
        <taxon>Nitratiruptoraceae</taxon>
        <taxon>Nitratiruptor</taxon>
    </lineage>
</organism>
<sequence length="368" mass="42143">MDSYEYSELLKKLEQKIENIKNIIKPDLITKRLKEIEQLENSPDFWNDAKKAGEIQKEKNRLSRILEKFEEARSSVEDAKDLFEMATEEEDTETLNMLFEEAPTLEEKVNKIEIETMLSGENDDKNAIVTIHPGAGGTESQDWASILYRMYLRWAERHGFKVEVLDYQEGEEAGIKDVSFIIKGENAYGYLKAENGIHRLVRISPFDSNARRHTSFASVMVSPEVDDDINIVIEDKDIRVDTYRASGAGGQHVNKTDSAIRITHIPTGIVVQCQNDRSQHKNRATAMKMLKSRLYELELEKKRAEQEGIEKSDIGWGHQIRSYVLAPYQQVKDTRSNKAYSNVEAILDGDIDKIIEDVLIAEAEKESK</sequence>
<dbReference type="EMBL" id="AP009178">
    <property type="protein sequence ID" value="BAF70641.1"/>
    <property type="molecule type" value="Genomic_DNA"/>
</dbReference>
<dbReference type="RefSeq" id="WP_012082904.1">
    <property type="nucleotide sequence ID" value="NC_009662.1"/>
</dbReference>
<dbReference type="SMR" id="A6Q582"/>
<dbReference type="FunCoup" id="A6Q582">
    <property type="interactions" value="432"/>
</dbReference>
<dbReference type="STRING" id="387092.NIS_1534"/>
<dbReference type="KEGG" id="nis:NIS_1534"/>
<dbReference type="eggNOG" id="COG1186">
    <property type="taxonomic scope" value="Bacteria"/>
</dbReference>
<dbReference type="HOGENOM" id="CLU_036856_6_0_7"/>
<dbReference type="InParanoid" id="A6Q582"/>
<dbReference type="OrthoDB" id="9806673at2"/>
<dbReference type="Proteomes" id="UP000001118">
    <property type="component" value="Chromosome"/>
</dbReference>
<dbReference type="GO" id="GO:0005737">
    <property type="term" value="C:cytoplasm"/>
    <property type="evidence" value="ECO:0007669"/>
    <property type="project" value="UniProtKB-SubCell"/>
</dbReference>
<dbReference type="GO" id="GO:0016149">
    <property type="term" value="F:translation release factor activity, codon specific"/>
    <property type="evidence" value="ECO:0007669"/>
    <property type="project" value="UniProtKB-UniRule"/>
</dbReference>
<dbReference type="FunFam" id="3.30.160.20:FF:000010">
    <property type="entry name" value="Peptide chain release factor 2"/>
    <property type="match status" value="1"/>
</dbReference>
<dbReference type="Gene3D" id="3.30.160.20">
    <property type="match status" value="1"/>
</dbReference>
<dbReference type="Gene3D" id="3.30.70.1660">
    <property type="match status" value="1"/>
</dbReference>
<dbReference type="Gene3D" id="1.20.58.410">
    <property type="entry name" value="Release factor"/>
    <property type="match status" value="1"/>
</dbReference>
<dbReference type="HAMAP" id="MF_00094">
    <property type="entry name" value="Rel_fac_2"/>
    <property type="match status" value="1"/>
</dbReference>
<dbReference type="InterPro" id="IPR005139">
    <property type="entry name" value="PCRF"/>
</dbReference>
<dbReference type="InterPro" id="IPR000352">
    <property type="entry name" value="Pep_chain_release_fac_I"/>
</dbReference>
<dbReference type="InterPro" id="IPR045853">
    <property type="entry name" value="Pep_chain_release_fac_I_sf"/>
</dbReference>
<dbReference type="InterPro" id="IPR004374">
    <property type="entry name" value="PrfB"/>
</dbReference>
<dbReference type="NCBIfam" id="TIGR00020">
    <property type="entry name" value="prfB"/>
    <property type="match status" value="1"/>
</dbReference>
<dbReference type="PANTHER" id="PTHR43116:SF3">
    <property type="entry name" value="CLASS I PEPTIDE CHAIN RELEASE FACTOR"/>
    <property type="match status" value="1"/>
</dbReference>
<dbReference type="PANTHER" id="PTHR43116">
    <property type="entry name" value="PEPTIDE CHAIN RELEASE FACTOR 2"/>
    <property type="match status" value="1"/>
</dbReference>
<dbReference type="Pfam" id="PF03462">
    <property type="entry name" value="PCRF"/>
    <property type="match status" value="1"/>
</dbReference>
<dbReference type="Pfam" id="PF00472">
    <property type="entry name" value="RF-1"/>
    <property type="match status" value="1"/>
</dbReference>
<dbReference type="SMART" id="SM00937">
    <property type="entry name" value="PCRF"/>
    <property type="match status" value="1"/>
</dbReference>
<dbReference type="SUPFAM" id="SSF75620">
    <property type="entry name" value="Release factor"/>
    <property type="match status" value="1"/>
</dbReference>
<dbReference type="PROSITE" id="PS00745">
    <property type="entry name" value="RF_PROK_I"/>
    <property type="match status" value="1"/>
</dbReference>
<name>RF2_NITSB</name>
<proteinExistence type="inferred from homology"/>
<comment type="function">
    <text evidence="1">Peptide chain release factor 2 directs the termination of translation in response to the peptide chain termination codons UGA and UAA.</text>
</comment>
<comment type="subcellular location">
    <subcellularLocation>
        <location evidence="1">Cytoplasm</location>
    </subcellularLocation>
</comment>
<comment type="PTM">
    <text evidence="1">Methylated by PrmC. Methylation increases the termination efficiency of RF2.</text>
</comment>
<comment type="similarity">
    <text evidence="1">Belongs to the prokaryotic/mitochondrial release factor family.</text>
</comment>
<gene>
    <name evidence="1" type="primary">prfB</name>
    <name type="ordered locus">NIS_1534</name>
</gene>
<evidence type="ECO:0000255" key="1">
    <source>
        <dbReference type="HAMAP-Rule" id="MF_00094"/>
    </source>
</evidence>
<accession>A6Q582</accession>